<comment type="catalytic activity">
    <reaction>
        <text>thymidine + ATP = dTMP + ADP + H(+)</text>
        <dbReference type="Rhea" id="RHEA:19129"/>
        <dbReference type="ChEBI" id="CHEBI:15378"/>
        <dbReference type="ChEBI" id="CHEBI:17748"/>
        <dbReference type="ChEBI" id="CHEBI:30616"/>
        <dbReference type="ChEBI" id="CHEBI:63528"/>
        <dbReference type="ChEBI" id="CHEBI:456216"/>
        <dbReference type="EC" id="2.7.1.21"/>
    </reaction>
</comment>
<comment type="subunit">
    <text evidence="1">Homotetramer.</text>
</comment>
<comment type="subcellular location">
    <subcellularLocation>
        <location evidence="3">Cytoplasm</location>
    </subcellularLocation>
</comment>
<comment type="similarity">
    <text evidence="3">Belongs to the thymidine kinase family.</text>
</comment>
<accession>O52951</accession>
<sequence>MDITFNTGLMGSGKSKKLIDDYLIDPKEKVALSVSLTEDTFSRGKIESRDGRSLRSINLNRDQFKQNISLLEIIIFMTNTQTIYIDESQFLPKETVEKFVSLSESYHVPIHFYGLDLTFTGELFDSSSHLLTILPSENINRISRGCEASKCSKIAQYNARIVDGKVSRSGETFVEEKSYYLALCSDHYYNDEKII</sequence>
<gene>
    <name type="primary">tdk</name>
</gene>
<organism>
    <name type="scientific">Bacillus subtilis subsp. natto</name>
    <dbReference type="NCBI Taxonomy" id="86029"/>
    <lineage>
        <taxon>Bacteria</taxon>
        <taxon>Bacillati</taxon>
        <taxon>Bacillota</taxon>
        <taxon>Bacilli</taxon>
        <taxon>Bacillales</taxon>
        <taxon>Bacillaceae</taxon>
        <taxon>Bacillus</taxon>
    </lineage>
</organism>
<reference key="1">
    <citation type="journal article" date="1998" name="FEBS Lett.">
        <title>A novel Bacillus natto plasmid pLS32 capable of replication in Bacillus subtilis.</title>
        <authorList>
            <person name="Tanaka T."/>
            <person name="Ogura M."/>
        </authorList>
    </citation>
    <scope>NUCLEOTIDE SEQUENCE [GENOMIC DNA]</scope>
    <source>
        <strain>IAM 1163</strain>
    </source>
</reference>
<dbReference type="EC" id="2.7.1.21"/>
<dbReference type="EMBL" id="D49467">
    <property type="protein sequence ID" value="BAA24875.1"/>
    <property type="molecule type" value="Genomic_DNA"/>
</dbReference>
<dbReference type="RefSeq" id="WP_013603338.1">
    <property type="nucleotide sequence ID" value="NC_015149.1"/>
</dbReference>
<dbReference type="RefSeq" id="YP_004243650.1">
    <property type="nucleotide sequence ID" value="NC_015149.1"/>
</dbReference>
<dbReference type="SMR" id="O52951"/>
<dbReference type="GO" id="GO:0005829">
    <property type="term" value="C:cytosol"/>
    <property type="evidence" value="ECO:0007669"/>
    <property type="project" value="TreeGrafter"/>
</dbReference>
<dbReference type="GO" id="GO:0005524">
    <property type="term" value="F:ATP binding"/>
    <property type="evidence" value="ECO:0007669"/>
    <property type="project" value="UniProtKB-KW"/>
</dbReference>
<dbReference type="GO" id="GO:0046872">
    <property type="term" value="F:metal ion binding"/>
    <property type="evidence" value="ECO:0007669"/>
    <property type="project" value="UniProtKB-KW"/>
</dbReference>
<dbReference type="GO" id="GO:0004797">
    <property type="term" value="F:thymidine kinase activity"/>
    <property type="evidence" value="ECO:0007669"/>
    <property type="project" value="UniProtKB-EC"/>
</dbReference>
<dbReference type="GO" id="GO:0071897">
    <property type="term" value="P:DNA biosynthetic process"/>
    <property type="evidence" value="ECO:0007669"/>
    <property type="project" value="UniProtKB-KW"/>
</dbReference>
<dbReference type="GO" id="GO:0046104">
    <property type="term" value="P:thymidine metabolic process"/>
    <property type="evidence" value="ECO:0007669"/>
    <property type="project" value="TreeGrafter"/>
</dbReference>
<dbReference type="Gene3D" id="3.40.50.300">
    <property type="entry name" value="P-loop containing nucleotide triphosphate hydrolases"/>
    <property type="match status" value="1"/>
</dbReference>
<dbReference type="InterPro" id="IPR027417">
    <property type="entry name" value="P-loop_NTPase"/>
</dbReference>
<dbReference type="InterPro" id="IPR001267">
    <property type="entry name" value="Thymidine_kinase"/>
</dbReference>
<dbReference type="PANTHER" id="PTHR11441">
    <property type="entry name" value="THYMIDINE KINASE"/>
    <property type="match status" value="1"/>
</dbReference>
<dbReference type="PANTHER" id="PTHR11441:SF0">
    <property type="entry name" value="THYMIDINE KINASE, CYTOSOLIC"/>
    <property type="match status" value="1"/>
</dbReference>
<dbReference type="Pfam" id="PF00265">
    <property type="entry name" value="TK"/>
    <property type="match status" value="1"/>
</dbReference>
<dbReference type="PIRSF" id="PIRSF035805">
    <property type="entry name" value="TK_cell"/>
    <property type="match status" value="1"/>
</dbReference>
<dbReference type="SUPFAM" id="SSF52540">
    <property type="entry name" value="P-loop containing nucleoside triphosphate hydrolases"/>
    <property type="match status" value="1"/>
</dbReference>
<evidence type="ECO:0000250" key="1"/>
<evidence type="ECO:0000255" key="2"/>
<evidence type="ECO:0000305" key="3"/>
<keyword id="KW-0067">ATP-binding</keyword>
<keyword id="KW-0963">Cytoplasm</keyword>
<keyword id="KW-0237">DNA synthesis</keyword>
<keyword id="KW-0418">Kinase</keyword>
<keyword id="KW-0479">Metal-binding</keyword>
<keyword id="KW-0547">Nucleotide-binding</keyword>
<keyword id="KW-0614">Plasmid</keyword>
<keyword id="KW-0808">Transferase</keyword>
<keyword id="KW-0862">Zinc</keyword>
<name>KITH_BACNA</name>
<protein>
    <recommendedName>
        <fullName>Thymidine kinase</fullName>
        <ecNumber>2.7.1.21</ecNumber>
    </recommendedName>
</protein>
<geneLocation type="plasmid">
    <name>pLS32</name>
</geneLocation>
<proteinExistence type="inferred from homology"/>
<feature type="chain" id="PRO_0000175057" description="Thymidine kinase">
    <location>
        <begin position="1"/>
        <end position="195"/>
    </location>
</feature>
<feature type="active site" description="Proton acceptor" evidence="2">
    <location>
        <position position="87"/>
    </location>
</feature>
<feature type="binding site" evidence="1">
    <location>
        <begin position="8"/>
        <end position="15"/>
    </location>
    <ligand>
        <name>ATP</name>
        <dbReference type="ChEBI" id="CHEBI:30616"/>
    </ligand>
</feature>
<feature type="binding site" evidence="1">
    <location>
        <begin position="86"/>
        <end position="89"/>
    </location>
    <ligand>
        <name>ATP</name>
        <dbReference type="ChEBI" id="CHEBI:30616"/>
    </ligand>
</feature>
<feature type="binding site" evidence="1">
    <location>
        <position position="146"/>
    </location>
    <ligand>
        <name>Zn(2+)</name>
        <dbReference type="ChEBI" id="CHEBI:29105"/>
    </ligand>
</feature>
<feature type="binding site" evidence="1">
    <location>
        <position position="151"/>
    </location>
    <ligand>
        <name>Zn(2+)</name>
        <dbReference type="ChEBI" id="CHEBI:29105"/>
    </ligand>
</feature>
<feature type="binding site" evidence="1">
    <location>
        <position position="184"/>
    </location>
    <ligand>
        <name>Zn(2+)</name>
        <dbReference type="ChEBI" id="CHEBI:29105"/>
    </ligand>
</feature>
<feature type="binding site" evidence="1">
    <location>
        <position position="187"/>
    </location>
    <ligand>
        <name>Zn(2+)</name>
        <dbReference type="ChEBI" id="CHEBI:29105"/>
    </ligand>
</feature>